<proteinExistence type="inferred from homology"/>
<keyword id="KW-0963">Cytoplasm</keyword>
<keyword id="KW-0328">Glycosyltransferase</keyword>
<keyword id="KW-0660">Purine salvage</keyword>
<keyword id="KW-0808">Transferase</keyword>
<dbReference type="EC" id="2.4.2.7" evidence="1"/>
<dbReference type="EMBL" id="CP000937">
    <property type="protein sequence ID" value="ABZ87198.1"/>
    <property type="molecule type" value="Genomic_DNA"/>
</dbReference>
<dbReference type="SMR" id="B0TWU0"/>
<dbReference type="KEGG" id="fph:Fphi_0975"/>
<dbReference type="eggNOG" id="COG0503">
    <property type="taxonomic scope" value="Bacteria"/>
</dbReference>
<dbReference type="HOGENOM" id="CLU_063339_3_0_6"/>
<dbReference type="UniPathway" id="UPA00588">
    <property type="reaction ID" value="UER00646"/>
</dbReference>
<dbReference type="GO" id="GO:0005737">
    <property type="term" value="C:cytoplasm"/>
    <property type="evidence" value="ECO:0007669"/>
    <property type="project" value="UniProtKB-SubCell"/>
</dbReference>
<dbReference type="GO" id="GO:0002055">
    <property type="term" value="F:adenine binding"/>
    <property type="evidence" value="ECO:0007669"/>
    <property type="project" value="TreeGrafter"/>
</dbReference>
<dbReference type="GO" id="GO:0003999">
    <property type="term" value="F:adenine phosphoribosyltransferase activity"/>
    <property type="evidence" value="ECO:0007669"/>
    <property type="project" value="UniProtKB-UniRule"/>
</dbReference>
<dbReference type="GO" id="GO:0016208">
    <property type="term" value="F:AMP binding"/>
    <property type="evidence" value="ECO:0007669"/>
    <property type="project" value="TreeGrafter"/>
</dbReference>
<dbReference type="GO" id="GO:0006168">
    <property type="term" value="P:adenine salvage"/>
    <property type="evidence" value="ECO:0007669"/>
    <property type="project" value="InterPro"/>
</dbReference>
<dbReference type="GO" id="GO:0044209">
    <property type="term" value="P:AMP salvage"/>
    <property type="evidence" value="ECO:0007669"/>
    <property type="project" value="UniProtKB-UniRule"/>
</dbReference>
<dbReference type="GO" id="GO:0006166">
    <property type="term" value="P:purine ribonucleoside salvage"/>
    <property type="evidence" value="ECO:0007669"/>
    <property type="project" value="UniProtKB-KW"/>
</dbReference>
<dbReference type="CDD" id="cd06223">
    <property type="entry name" value="PRTases_typeI"/>
    <property type="match status" value="1"/>
</dbReference>
<dbReference type="FunFam" id="3.40.50.2020:FF:000004">
    <property type="entry name" value="Adenine phosphoribosyltransferase"/>
    <property type="match status" value="1"/>
</dbReference>
<dbReference type="Gene3D" id="3.40.50.2020">
    <property type="match status" value="1"/>
</dbReference>
<dbReference type="HAMAP" id="MF_00004">
    <property type="entry name" value="Aden_phosphoribosyltr"/>
    <property type="match status" value="1"/>
</dbReference>
<dbReference type="InterPro" id="IPR005764">
    <property type="entry name" value="Ade_phspho_trans"/>
</dbReference>
<dbReference type="InterPro" id="IPR000836">
    <property type="entry name" value="PRibTrfase_dom"/>
</dbReference>
<dbReference type="InterPro" id="IPR029057">
    <property type="entry name" value="PRTase-like"/>
</dbReference>
<dbReference type="InterPro" id="IPR050054">
    <property type="entry name" value="UPRTase/APRTase"/>
</dbReference>
<dbReference type="NCBIfam" id="TIGR01090">
    <property type="entry name" value="apt"/>
    <property type="match status" value="1"/>
</dbReference>
<dbReference type="NCBIfam" id="NF002634">
    <property type="entry name" value="PRK02304.1-3"/>
    <property type="match status" value="1"/>
</dbReference>
<dbReference type="NCBIfam" id="NF002636">
    <property type="entry name" value="PRK02304.1-5"/>
    <property type="match status" value="1"/>
</dbReference>
<dbReference type="PANTHER" id="PTHR32315">
    <property type="entry name" value="ADENINE PHOSPHORIBOSYLTRANSFERASE"/>
    <property type="match status" value="1"/>
</dbReference>
<dbReference type="PANTHER" id="PTHR32315:SF3">
    <property type="entry name" value="ADENINE PHOSPHORIBOSYLTRANSFERASE"/>
    <property type="match status" value="1"/>
</dbReference>
<dbReference type="Pfam" id="PF00156">
    <property type="entry name" value="Pribosyltran"/>
    <property type="match status" value="1"/>
</dbReference>
<dbReference type="SUPFAM" id="SSF53271">
    <property type="entry name" value="PRTase-like"/>
    <property type="match status" value="1"/>
</dbReference>
<dbReference type="PROSITE" id="PS00103">
    <property type="entry name" value="PUR_PYR_PR_TRANSFER"/>
    <property type="match status" value="1"/>
</dbReference>
<reference key="1">
    <citation type="submission" date="2007-12" db="EMBL/GenBank/DDBJ databases">
        <title>Complete sequence of chromosome of Francisella philomiragia subsp. philomiragia ATCC 25017.</title>
        <authorList>
            <consortium name="US DOE Joint Genome Institute"/>
            <person name="Copeland A."/>
            <person name="Lucas S."/>
            <person name="Lapidus A."/>
            <person name="Barry K."/>
            <person name="Detter J.C."/>
            <person name="Glavina del Rio T."/>
            <person name="Hammon N."/>
            <person name="Israni S."/>
            <person name="Dalin E."/>
            <person name="Tice H."/>
            <person name="Pitluck S."/>
            <person name="Chain P."/>
            <person name="Malfatti S."/>
            <person name="Shin M."/>
            <person name="Vergez L."/>
            <person name="Schmutz J."/>
            <person name="Larimer F."/>
            <person name="Land M."/>
            <person name="Hauser L."/>
            <person name="Richardson P."/>
        </authorList>
    </citation>
    <scope>NUCLEOTIDE SEQUENCE [LARGE SCALE GENOMIC DNA]</scope>
    <source>
        <strain>ATCC 25017 / CCUG 19701 / FSC 153 / O#319-036</strain>
    </source>
</reference>
<organism>
    <name type="scientific">Francisella philomiragia subsp. philomiragia (strain ATCC 25017 / CCUG 19701 / FSC 153 / O#319-036)</name>
    <dbReference type="NCBI Taxonomy" id="484022"/>
    <lineage>
        <taxon>Bacteria</taxon>
        <taxon>Pseudomonadati</taxon>
        <taxon>Pseudomonadota</taxon>
        <taxon>Gammaproteobacteria</taxon>
        <taxon>Thiotrichales</taxon>
        <taxon>Francisellaceae</taxon>
        <taxon>Francisella</taxon>
    </lineage>
</organism>
<accession>B0TWU0</accession>
<name>APT_FRAP2</name>
<feature type="chain" id="PRO_1000073793" description="Adenine phosphoribosyltransferase">
    <location>
        <begin position="1"/>
        <end position="175"/>
    </location>
</feature>
<protein>
    <recommendedName>
        <fullName evidence="1">Adenine phosphoribosyltransferase</fullName>
        <shortName evidence="1">APRT</shortName>
        <ecNumber evidence="1">2.4.2.7</ecNumber>
    </recommendedName>
</protein>
<sequence>MNLDFIKDRIVAVPDFPKPGIVFRDITPLLADPQGLKMTAKAMAEELKSKGIKPTVIAGTESRGFIFGVALAEVLGLGFVPVRKPGKLPRETYKVSYQLEYGSDSLEIHKDAFKPTDKVLVVDDLLATGGTAKATVQLIEKTQASVAGLIFVIELEDLNGRKVLEGHNVSALVKY</sequence>
<comment type="function">
    <text evidence="1">Catalyzes a salvage reaction resulting in the formation of AMP, that is energically less costly than de novo synthesis.</text>
</comment>
<comment type="catalytic activity">
    <reaction evidence="1">
        <text>AMP + diphosphate = 5-phospho-alpha-D-ribose 1-diphosphate + adenine</text>
        <dbReference type="Rhea" id="RHEA:16609"/>
        <dbReference type="ChEBI" id="CHEBI:16708"/>
        <dbReference type="ChEBI" id="CHEBI:33019"/>
        <dbReference type="ChEBI" id="CHEBI:58017"/>
        <dbReference type="ChEBI" id="CHEBI:456215"/>
        <dbReference type="EC" id="2.4.2.7"/>
    </reaction>
</comment>
<comment type="pathway">
    <text evidence="1">Purine metabolism; AMP biosynthesis via salvage pathway; AMP from adenine: step 1/1.</text>
</comment>
<comment type="subunit">
    <text evidence="1">Homodimer.</text>
</comment>
<comment type="subcellular location">
    <subcellularLocation>
        <location evidence="1">Cytoplasm</location>
    </subcellularLocation>
</comment>
<comment type="similarity">
    <text evidence="1">Belongs to the purine/pyrimidine phosphoribosyltransferase family.</text>
</comment>
<gene>
    <name evidence="1" type="primary">apt</name>
    <name type="ordered locus">Fphi_0975</name>
</gene>
<evidence type="ECO:0000255" key="1">
    <source>
        <dbReference type="HAMAP-Rule" id="MF_00004"/>
    </source>
</evidence>